<name>PRIB_VIBPA</name>
<proteinExistence type="inferred from homology"/>
<organism>
    <name type="scientific">Vibrio parahaemolyticus serotype O3:K6 (strain RIMD 2210633)</name>
    <dbReference type="NCBI Taxonomy" id="223926"/>
    <lineage>
        <taxon>Bacteria</taxon>
        <taxon>Pseudomonadati</taxon>
        <taxon>Pseudomonadota</taxon>
        <taxon>Gammaproteobacteria</taxon>
        <taxon>Vibrionales</taxon>
        <taxon>Vibrionaceae</taxon>
        <taxon>Vibrio</taxon>
    </lineage>
</organism>
<accession>Q87L73</accession>
<sequence length="100" mass="11031">MTNRMELSGTIAKPPIRSKSPGGIEHCRFWLEHRSTVIEADLPRQVYCRMPVVVSGLRSQAITQNLVQGSNIKVSGFVAYQTGRNGVGKLVLHADNITQI</sequence>
<keyword id="KW-0235">DNA replication</keyword>
<keyword id="KW-0238">DNA-binding</keyword>
<keyword id="KW-0639">Primosome</keyword>
<protein>
    <recommendedName>
        <fullName evidence="1">Replication restart protein PriB</fullName>
    </recommendedName>
</protein>
<feature type="chain" id="PRO_0000199065" description="Replication restart protein PriB">
    <location>
        <begin position="1"/>
        <end position="100"/>
    </location>
</feature>
<feature type="domain" description="SSB" evidence="1">
    <location>
        <begin position="1"/>
        <end position="100"/>
    </location>
</feature>
<reference key="1">
    <citation type="journal article" date="2003" name="Lancet">
        <title>Genome sequence of Vibrio parahaemolyticus: a pathogenic mechanism distinct from that of V. cholerae.</title>
        <authorList>
            <person name="Makino K."/>
            <person name="Oshima K."/>
            <person name="Kurokawa K."/>
            <person name="Yokoyama K."/>
            <person name="Uda T."/>
            <person name="Tagomori K."/>
            <person name="Iijima Y."/>
            <person name="Najima M."/>
            <person name="Nakano M."/>
            <person name="Yamashita A."/>
            <person name="Kubota Y."/>
            <person name="Kimura S."/>
            <person name="Yasunaga T."/>
            <person name="Honda T."/>
            <person name="Shinagawa H."/>
            <person name="Hattori M."/>
            <person name="Iida T."/>
        </authorList>
    </citation>
    <scope>NUCLEOTIDE SEQUENCE [LARGE SCALE GENOMIC DNA]</scope>
    <source>
        <strain>RIMD 2210633</strain>
    </source>
</reference>
<comment type="function">
    <text evidence="1">Involved in the restart of stalled replication forks, which reloads the replicative helicase on sites other than the origin of replication; the PriA-PriB pathway is the major replication restart pathway. During primosome assembly it facilitates complex formation between PriA and DnaT on DNA; stabilizes PriA on DNA. Stimulates the DNA unwinding activity of PriA helicase.</text>
</comment>
<comment type="subunit">
    <text evidence="1">Homodimer. Interacts with PriA and DnaT. Component of the replication restart primosome. Primosome assembly occurs via a 'hand-off' mechanism. PriA binds to replication forks, subsequently PriB then DnaT bind; DnaT then displaces ssDNA to generate the helicase loading substrate.</text>
</comment>
<comment type="similarity">
    <text evidence="1">Belongs to the PriB family.</text>
</comment>
<gene>
    <name evidence="1" type="primary">priB</name>
    <name type="ordered locus">VP2739</name>
</gene>
<evidence type="ECO:0000255" key="1">
    <source>
        <dbReference type="HAMAP-Rule" id="MF_00720"/>
    </source>
</evidence>
<dbReference type="EMBL" id="BA000031">
    <property type="protein sequence ID" value="BAC61002.1"/>
    <property type="molecule type" value="Genomic_DNA"/>
</dbReference>
<dbReference type="RefSeq" id="NP_799118.1">
    <property type="nucleotide sequence ID" value="NC_004603.1"/>
</dbReference>
<dbReference type="RefSeq" id="WP_005467185.1">
    <property type="nucleotide sequence ID" value="NC_004603.1"/>
</dbReference>
<dbReference type="SMR" id="Q87L73"/>
<dbReference type="GeneID" id="1190289"/>
<dbReference type="KEGG" id="vpa:VP2739"/>
<dbReference type="PATRIC" id="fig|223926.6.peg.2636"/>
<dbReference type="eggNOG" id="COG2965">
    <property type="taxonomic scope" value="Bacteria"/>
</dbReference>
<dbReference type="HOGENOM" id="CLU_166075_0_0_6"/>
<dbReference type="Proteomes" id="UP000002493">
    <property type="component" value="Chromosome 1"/>
</dbReference>
<dbReference type="GO" id="GO:1990077">
    <property type="term" value="C:primosome complex"/>
    <property type="evidence" value="ECO:0007669"/>
    <property type="project" value="UniProtKB-KW"/>
</dbReference>
<dbReference type="GO" id="GO:0003697">
    <property type="term" value="F:single-stranded DNA binding"/>
    <property type="evidence" value="ECO:0007669"/>
    <property type="project" value="UniProtKB-UniRule"/>
</dbReference>
<dbReference type="GO" id="GO:0006269">
    <property type="term" value="P:DNA replication, synthesis of primer"/>
    <property type="evidence" value="ECO:0007669"/>
    <property type="project" value="UniProtKB-KW"/>
</dbReference>
<dbReference type="Gene3D" id="2.40.50.140">
    <property type="entry name" value="Nucleic acid-binding proteins"/>
    <property type="match status" value="1"/>
</dbReference>
<dbReference type="HAMAP" id="MF_00720">
    <property type="entry name" value="PriB"/>
    <property type="match status" value="1"/>
</dbReference>
<dbReference type="InterPro" id="IPR012340">
    <property type="entry name" value="NA-bd_OB-fold"/>
</dbReference>
<dbReference type="InterPro" id="IPR000424">
    <property type="entry name" value="Primosome_PriB/ssb"/>
</dbReference>
<dbReference type="InterPro" id="IPR023646">
    <property type="entry name" value="Prisomal_replication_PriB"/>
</dbReference>
<dbReference type="NCBIfam" id="TIGR04418">
    <property type="entry name" value="PriB_gamma"/>
    <property type="match status" value="1"/>
</dbReference>
<dbReference type="Pfam" id="PF22657">
    <property type="entry name" value="SSB_1"/>
    <property type="match status" value="1"/>
</dbReference>
<dbReference type="PIRSF" id="PIRSF003135">
    <property type="entry name" value="Primosomal_n"/>
    <property type="match status" value="1"/>
</dbReference>
<dbReference type="SUPFAM" id="SSF50249">
    <property type="entry name" value="Nucleic acid-binding proteins"/>
    <property type="match status" value="1"/>
</dbReference>
<dbReference type="PROSITE" id="PS50935">
    <property type="entry name" value="SSB"/>
    <property type="match status" value="1"/>
</dbReference>